<accession>B4MY75</accession>
<comment type="function">
    <text evidence="1">Component of the eukaryotic translation initiation factor 3 (eIF-3) complex, which is involved in protein synthesis of a specialized repertoire of mRNAs and, together with other initiation factors, stimulates binding of mRNA and methionyl-tRNAi to the 40S ribosome. The eIF-3 complex specifically targets and initiates translation of a subset of mRNAs involved in cell proliferation.</text>
</comment>
<comment type="subunit">
    <text evidence="1">Component of the eukaryotic translation initiation factor 3 (eIF-3) complex. The eIF-3 complex interacts with pix.</text>
</comment>
<comment type="subcellular location">
    <subcellularLocation>
        <location evidence="1">Cytoplasm</location>
    </subcellularLocation>
    <subcellularLocation>
        <location evidence="1">Golgi apparatus</location>
    </subcellularLocation>
</comment>
<comment type="similarity">
    <text evidence="1">Belongs to the eIF-3 subunit M family.</text>
</comment>
<proteinExistence type="inferred from homology"/>
<name>EIF3M_DROWI</name>
<evidence type="ECO:0000255" key="1">
    <source>
        <dbReference type="HAMAP-Rule" id="MF_03012"/>
    </source>
</evidence>
<evidence type="ECO:0000255" key="2">
    <source>
        <dbReference type="PROSITE-ProRule" id="PRU01185"/>
    </source>
</evidence>
<keyword id="KW-0963">Cytoplasm</keyword>
<keyword id="KW-0333">Golgi apparatus</keyword>
<keyword id="KW-0396">Initiation factor</keyword>
<keyword id="KW-0648">Protein biosynthesis</keyword>
<keyword id="KW-1185">Reference proteome</keyword>
<feature type="chain" id="PRO_0000366006" description="Eukaryotic translation initiation factor 3 subunit M">
    <location>
        <begin position="1"/>
        <end position="387"/>
    </location>
</feature>
<feature type="domain" description="PCI" evidence="2">
    <location>
        <begin position="181"/>
        <end position="340"/>
    </location>
</feature>
<gene>
    <name evidence="1" type="primary">Tango7</name>
    <name type="ORF">GK22125</name>
</gene>
<organism>
    <name type="scientific">Drosophila willistoni</name>
    <name type="common">Fruit fly</name>
    <dbReference type="NCBI Taxonomy" id="7260"/>
    <lineage>
        <taxon>Eukaryota</taxon>
        <taxon>Metazoa</taxon>
        <taxon>Ecdysozoa</taxon>
        <taxon>Arthropoda</taxon>
        <taxon>Hexapoda</taxon>
        <taxon>Insecta</taxon>
        <taxon>Pterygota</taxon>
        <taxon>Neoptera</taxon>
        <taxon>Endopterygota</taxon>
        <taxon>Diptera</taxon>
        <taxon>Brachycera</taxon>
        <taxon>Muscomorpha</taxon>
        <taxon>Ephydroidea</taxon>
        <taxon>Drosophilidae</taxon>
        <taxon>Drosophila</taxon>
        <taxon>Sophophora</taxon>
    </lineage>
</organism>
<protein>
    <recommendedName>
        <fullName evidence="1">Eukaryotic translation initiation factor 3 subunit M</fullName>
        <shortName evidence="1">eIF3m</shortName>
    </recommendedName>
    <alternativeName>
        <fullName evidence="1">Transport and Golgi organization protein 7</fullName>
        <shortName evidence="1">Tango-7</shortName>
    </alternativeName>
</protein>
<dbReference type="EMBL" id="CH963894">
    <property type="protein sequence ID" value="EDW77064.1"/>
    <property type="molecule type" value="Genomic_DNA"/>
</dbReference>
<dbReference type="SMR" id="B4MY75"/>
<dbReference type="STRING" id="7260.B4MY75"/>
<dbReference type="EnsemblMetazoa" id="FBtr0252776">
    <property type="protein sequence ID" value="FBpp0251268"/>
    <property type="gene ID" value="FBgn0224110"/>
</dbReference>
<dbReference type="EnsemblMetazoa" id="XM_002066042.3">
    <property type="protein sequence ID" value="XP_002066078.1"/>
    <property type="gene ID" value="LOC6643303"/>
</dbReference>
<dbReference type="GeneID" id="6643303"/>
<dbReference type="KEGG" id="dwi:6643303"/>
<dbReference type="CTD" id="10480"/>
<dbReference type="eggNOG" id="KOG2753">
    <property type="taxonomic scope" value="Eukaryota"/>
</dbReference>
<dbReference type="HOGENOM" id="CLU_035254_1_0_1"/>
<dbReference type="OMA" id="VCLKALW"/>
<dbReference type="OrthoDB" id="7900529at2759"/>
<dbReference type="PhylomeDB" id="B4MY75"/>
<dbReference type="Proteomes" id="UP000007798">
    <property type="component" value="Unassembled WGS sequence"/>
</dbReference>
<dbReference type="GO" id="GO:0005829">
    <property type="term" value="C:cytosol"/>
    <property type="evidence" value="ECO:0007669"/>
    <property type="project" value="EnsemblMetazoa"/>
</dbReference>
<dbReference type="GO" id="GO:0016282">
    <property type="term" value="C:eukaryotic 43S preinitiation complex"/>
    <property type="evidence" value="ECO:0007669"/>
    <property type="project" value="UniProtKB-UniRule"/>
</dbReference>
<dbReference type="GO" id="GO:0033290">
    <property type="term" value="C:eukaryotic 48S preinitiation complex"/>
    <property type="evidence" value="ECO:0007669"/>
    <property type="project" value="UniProtKB-UniRule"/>
</dbReference>
<dbReference type="GO" id="GO:0071541">
    <property type="term" value="C:eukaryotic translation initiation factor 3 complex, eIF3m"/>
    <property type="evidence" value="ECO:0007669"/>
    <property type="project" value="UniProtKB-UniRule"/>
</dbReference>
<dbReference type="GO" id="GO:0005794">
    <property type="term" value="C:Golgi apparatus"/>
    <property type="evidence" value="ECO:0007669"/>
    <property type="project" value="UniProtKB-SubCell"/>
</dbReference>
<dbReference type="GO" id="GO:0070865">
    <property type="term" value="C:investment cone"/>
    <property type="evidence" value="ECO:0007669"/>
    <property type="project" value="EnsemblMetazoa"/>
</dbReference>
<dbReference type="GO" id="GO:0089720">
    <property type="term" value="F:caspase binding"/>
    <property type="evidence" value="ECO:0007669"/>
    <property type="project" value="EnsemblMetazoa"/>
</dbReference>
<dbReference type="GO" id="GO:0140608">
    <property type="term" value="F:cysteine-type endopeptidase activator activity"/>
    <property type="evidence" value="ECO:0007669"/>
    <property type="project" value="EnsemblMetazoa"/>
</dbReference>
<dbReference type="GO" id="GO:0003743">
    <property type="term" value="F:translation initiation factor activity"/>
    <property type="evidence" value="ECO:0007669"/>
    <property type="project" value="UniProtKB-UniRule"/>
</dbReference>
<dbReference type="GO" id="GO:0001732">
    <property type="term" value="P:formation of cytoplasmic translation initiation complex"/>
    <property type="evidence" value="ECO:0007669"/>
    <property type="project" value="UniProtKB-UniRule"/>
</dbReference>
<dbReference type="GO" id="GO:0007030">
    <property type="term" value="P:Golgi organization"/>
    <property type="evidence" value="ECO:0007669"/>
    <property type="project" value="EnsemblMetazoa"/>
</dbReference>
<dbReference type="GO" id="GO:0009306">
    <property type="term" value="P:protein secretion"/>
    <property type="evidence" value="ECO:0007669"/>
    <property type="project" value="EnsemblMetazoa"/>
</dbReference>
<dbReference type="GO" id="GO:0007291">
    <property type="term" value="P:sperm individualization"/>
    <property type="evidence" value="ECO:0007669"/>
    <property type="project" value="EnsemblMetazoa"/>
</dbReference>
<dbReference type="HAMAP" id="MF_03012">
    <property type="entry name" value="eIF3m"/>
    <property type="match status" value="1"/>
</dbReference>
<dbReference type="InterPro" id="IPR016024">
    <property type="entry name" value="ARM-type_fold"/>
</dbReference>
<dbReference type="InterPro" id="IPR045237">
    <property type="entry name" value="COPS7/eIF3m"/>
</dbReference>
<dbReference type="InterPro" id="IPR027528">
    <property type="entry name" value="eIF3m"/>
</dbReference>
<dbReference type="InterPro" id="IPR040750">
    <property type="entry name" value="eIF3m_C_helix"/>
</dbReference>
<dbReference type="InterPro" id="IPR000717">
    <property type="entry name" value="PCI_dom"/>
</dbReference>
<dbReference type="InterPro" id="IPR036390">
    <property type="entry name" value="WH_DNA-bd_sf"/>
</dbReference>
<dbReference type="PANTHER" id="PTHR15350">
    <property type="entry name" value="COP9 SIGNALOSOME COMPLEX SUBUNIT 7/DENDRITIC CELL PROTEIN GA17"/>
    <property type="match status" value="1"/>
</dbReference>
<dbReference type="PANTHER" id="PTHR15350:SF2">
    <property type="entry name" value="EUKARYOTIC TRANSLATION INITIATION FACTOR 3 SUBUNIT M"/>
    <property type="match status" value="1"/>
</dbReference>
<dbReference type="Pfam" id="PF18005">
    <property type="entry name" value="eIF3m_C_helix"/>
    <property type="match status" value="1"/>
</dbReference>
<dbReference type="Pfam" id="PF01399">
    <property type="entry name" value="PCI"/>
    <property type="match status" value="1"/>
</dbReference>
<dbReference type="SMART" id="SM00088">
    <property type="entry name" value="PINT"/>
    <property type="match status" value="1"/>
</dbReference>
<dbReference type="SUPFAM" id="SSF48371">
    <property type="entry name" value="ARM repeat"/>
    <property type="match status" value="1"/>
</dbReference>
<dbReference type="SUPFAM" id="SSF46785">
    <property type="entry name" value="Winged helix' DNA-binding domain"/>
    <property type="match status" value="1"/>
</dbReference>
<dbReference type="PROSITE" id="PS50250">
    <property type="entry name" value="PCI"/>
    <property type="match status" value="1"/>
</dbReference>
<reference key="1">
    <citation type="journal article" date="2007" name="Nature">
        <title>Evolution of genes and genomes on the Drosophila phylogeny.</title>
        <authorList>
            <consortium name="Drosophila 12 genomes consortium"/>
        </authorList>
    </citation>
    <scope>NUCLEOTIDE SEQUENCE [LARGE SCALE GENOMIC DNA]</scope>
    <source>
        <strain>Tucson 14030-0811.24</strain>
    </source>
</reference>
<sequence>MTSHPVFIDLSLDEQVQELRKYFKKLGAEISSEKSNKGVEDDLHKIIGVCDVCFKDGEPAQIDGILNSIVSIMITIPLDRGENIVLAYCEKMTKAPNQPLAKVCLQSLWRLFNNLDTASPLRYHVYYHLVQVAKQCDQVLEVFTGVDQLKSQFANCPPSSEQMQKLYRLLHDVTKDTNLERSSKVMIELLGTYTADNACVAREDAMKCIVTALADPNTFLLDPLLSLKPVRFLEGDLIHDLLSIFVSEKLPAYVEFYEEHKEFVNSQGLNHEQNMKKMRLLTFMQLAESNAEMSFEALTKELQITENEVEPFVIEVLKTKLVRARLDQANRKVHISSTMHRTFGAPQWEQLRDLLQAWKENLSSVREGLTNVASAQLDLARSQKLIH</sequence>